<keyword id="KW-0058">Aromatic hydrocarbons catabolism</keyword>
<keyword id="KW-0274">FAD</keyword>
<keyword id="KW-0285">Flavoprotein</keyword>
<keyword id="KW-0520">NAD</keyword>
<keyword id="KW-0560">Oxidoreductase</keyword>
<evidence type="ECO:0000255" key="1">
    <source>
        <dbReference type="HAMAP-Rule" id="MF_01652"/>
    </source>
</evidence>
<feature type="chain" id="PRO_1000186993" description="3-(3-hydroxy-phenyl)propionate/3-hydroxycinnamic acid hydroxylase">
    <location>
        <begin position="1"/>
        <end position="554"/>
    </location>
</feature>
<feature type="binding site" evidence="1">
    <location>
        <begin position="17"/>
        <end position="46"/>
    </location>
    <ligand>
        <name>FAD</name>
        <dbReference type="ChEBI" id="CHEBI:57692"/>
    </ligand>
</feature>
<feature type="binding site" evidence="1">
    <location>
        <begin position="285"/>
        <end position="295"/>
    </location>
    <ligand>
        <name>FAD</name>
        <dbReference type="ChEBI" id="CHEBI:57692"/>
    </ligand>
</feature>
<proteinExistence type="inferred from homology"/>
<dbReference type="EC" id="1.14.13.127" evidence="1"/>
<dbReference type="EMBL" id="CU928160">
    <property type="protein sequence ID" value="CAQ97222.1"/>
    <property type="molecule type" value="Genomic_DNA"/>
</dbReference>
<dbReference type="RefSeq" id="WP_001007441.1">
    <property type="nucleotide sequence ID" value="NC_011741.1"/>
</dbReference>
<dbReference type="SMR" id="B7M2Z5"/>
<dbReference type="KEGG" id="ecr:ECIAI1_0348"/>
<dbReference type="HOGENOM" id="CLU_009665_20_2_6"/>
<dbReference type="UniPathway" id="UPA00714"/>
<dbReference type="GO" id="GO:0008688">
    <property type="term" value="F:3-(3-hydroxyphenyl)propionate hydroxylase activity"/>
    <property type="evidence" value="ECO:0007669"/>
    <property type="project" value="UniProtKB-UniRule"/>
</dbReference>
<dbReference type="GO" id="GO:0071949">
    <property type="term" value="F:FAD binding"/>
    <property type="evidence" value="ECO:0007669"/>
    <property type="project" value="InterPro"/>
</dbReference>
<dbReference type="GO" id="GO:0019622">
    <property type="term" value="P:3-(3-hydroxy)phenylpropionate catabolic process"/>
    <property type="evidence" value="ECO:0007669"/>
    <property type="project" value="UniProtKB-UniRule"/>
</dbReference>
<dbReference type="GO" id="GO:0019380">
    <property type="term" value="P:3-phenylpropionate catabolic process"/>
    <property type="evidence" value="ECO:0007669"/>
    <property type="project" value="UniProtKB-UniPathway"/>
</dbReference>
<dbReference type="FunFam" id="3.50.50.60:FF:000126">
    <property type="entry name" value="3-(3-hydroxy-phenyl)propionate/3-hydroxycinnamic acid hydroxylase"/>
    <property type="match status" value="1"/>
</dbReference>
<dbReference type="Gene3D" id="3.30.70.2450">
    <property type="match status" value="1"/>
</dbReference>
<dbReference type="Gene3D" id="3.50.50.60">
    <property type="entry name" value="FAD/NAD(P)-binding domain"/>
    <property type="match status" value="1"/>
</dbReference>
<dbReference type="HAMAP" id="MF_01652">
    <property type="entry name" value="MhpA"/>
    <property type="match status" value="1"/>
</dbReference>
<dbReference type="InterPro" id="IPR023786">
    <property type="entry name" value="3-HPP/3HCI_hydroxylase"/>
</dbReference>
<dbReference type="InterPro" id="IPR002938">
    <property type="entry name" value="FAD-bd"/>
</dbReference>
<dbReference type="InterPro" id="IPR036188">
    <property type="entry name" value="FAD/NAD-bd_sf"/>
</dbReference>
<dbReference type="InterPro" id="IPR050631">
    <property type="entry name" value="PheA/TfdB_FAD_monoxygenase"/>
</dbReference>
<dbReference type="NCBIfam" id="NF004827">
    <property type="entry name" value="PRK06183.1-1"/>
    <property type="match status" value="1"/>
</dbReference>
<dbReference type="NCBIfam" id="NF004829">
    <property type="entry name" value="PRK06183.1-3"/>
    <property type="match status" value="1"/>
</dbReference>
<dbReference type="NCBIfam" id="NF004831">
    <property type="entry name" value="PRK06183.1-5"/>
    <property type="match status" value="1"/>
</dbReference>
<dbReference type="PANTHER" id="PTHR43476">
    <property type="entry name" value="3-(3-HYDROXY-PHENYL)PROPIONATE/3-HYDROXYCINNAMIC ACID HYDROXYLASE"/>
    <property type="match status" value="1"/>
</dbReference>
<dbReference type="PANTHER" id="PTHR43476:SF3">
    <property type="entry name" value="FAD-BINDING MONOOXYGENASE"/>
    <property type="match status" value="1"/>
</dbReference>
<dbReference type="Pfam" id="PF01494">
    <property type="entry name" value="FAD_binding_3"/>
    <property type="match status" value="1"/>
</dbReference>
<dbReference type="PRINTS" id="PR00420">
    <property type="entry name" value="RNGMNOXGNASE"/>
</dbReference>
<dbReference type="SUPFAM" id="SSF51905">
    <property type="entry name" value="FAD/NAD(P)-binding domain"/>
    <property type="match status" value="1"/>
</dbReference>
<name>MHPA_ECO8A</name>
<protein>
    <recommendedName>
        <fullName evidence="1">3-(3-hydroxy-phenyl)propionate/3-hydroxycinnamic acid hydroxylase</fullName>
        <shortName evidence="1">3-HCI hydroxylase</shortName>
        <shortName evidence="1">3-HPP hydroxylase</shortName>
        <ecNumber evidence="1">1.14.13.127</ecNumber>
    </recommendedName>
</protein>
<sequence>MAIQHPDIQPAVNHSVQVAIAGAGPVGLMMANYLGQMGIDVLVVEKLDKLIDYPRAIGIDDEALRTMQSVGLVENVLPHTTPWHAMRFLTPKGRCFADIQPMTDEFGWPRRNAFIQPQVDAVMLEGLSRFPNVRCLFARELEAFSQQNDEVTLHLKTAEGQREIVKAQWLVACDGGASFVRRTLNVPFEGKTAPNQWIVVDIANDPLSTPHIYLCGDPVRPYVSAALPHAVRRFEFMVMPGETEEQLREPQNMRKLLSKVLPNPDNVELIRQRVYTHNARLAQRFRIDRVLLAGDAAHIMPVWQGQGYNSGMRDAFNLAWKLALVIQGKARDALLDTYQQERRDHAKAMIDLSVTAGNVLAPPKRWQGTLRDGVSWLLNYLPPVKRYFLEMRFKPMPQYYGGALVREGEAKHSPVGKMFIQPKVTLENGDVTLLDNAIGANFAVIGWGCNPLWGMSDEQIQQWRALGTRFIQVVPEVQIHTAQDNHDGVLRVGDTQGRLRSWFAQHNASLVVMRPDRFVAATAIPQTLGKTLNKLASVMTLTRPDADVSVEKVA</sequence>
<reference key="1">
    <citation type="journal article" date="2009" name="PLoS Genet.">
        <title>Organised genome dynamics in the Escherichia coli species results in highly diverse adaptive paths.</title>
        <authorList>
            <person name="Touchon M."/>
            <person name="Hoede C."/>
            <person name="Tenaillon O."/>
            <person name="Barbe V."/>
            <person name="Baeriswyl S."/>
            <person name="Bidet P."/>
            <person name="Bingen E."/>
            <person name="Bonacorsi S."/>
            <person name="Bouchier C."/>
            <person name="Bouvet O."/>
            <person name="Calteau A."/>
            <person name="Chiapello H."/>
            <person name="Clermont O."/>
            <person name="Cruveiller S."/>
            <person name="Danchin A."/>
            <person name="Diard M."/>
            <person name="Dossat C."/>
            <person name="Karoui M.E."/>
            <person name="Frapy E."/>
            <person name="Garry L."/>
            <person name="Ghigo J.M."/>
            <person name="Gilles A.M."/>
            <person name="Johnson J."/>
            <person name="Le Bouguenec C."/>
            <person name="Lescat M."/>
            <person name="Mangenot S."/>
            <person name="Martinez-Jehanne V."/>
            <person name="Matic I."/>
            <person name="Nassif X."/>
            <person name="Oztas S."/>
            <person name="Petit M.A."/>
            <person name="Pichon C."/>
            <person name="Rouy Z."/>
            <person name="Ruf C.S."/>
            <person name="Schneider D."/>
            <person name="Tourret J."/>
            <person name="Vacherie B."/>
            <person name="Vallenet D."/>
            <person name="Medigue C."/>
            <person name="Rocha E.P.C."/>
            <person name="Denamur E."/>
        </authorList>
    </citation>
    <scope>NUCLEOTIDE SEQUENCE [LARGE SCALE GENOMIC DNA]</scope>
    <source>
        <strain>IAI1</strain>
    </source>
</reference>
<accession>B7M2Z5</accession>
<organism>
    <name type="scientific">Escherichia coli O8 (strain IAI1)</name>
    <dbReference type="NCBI Taxonomy" id="585034"/>
    <lineage>
        <taxon>Bacteria</taxon>
        <taxon>Pseudomonadati</taxon>
        <taxon>Pseudomonadota</taxon>
        <taxon>Gammaproteobacteria</taxon>
        <taxon>Enterobacterales</taxon>
        <taxon>Enterobacteriaceae</taxon>
        <taxon>Escherichia</taxon>
    </lineage>
</organism>
<gene>
    <name evidence="1" type="primary">mhpA</name>
    <name type="ordered locus">ECIAI1_0348</name>
</gene>
<comment type="function">
    <text evidence="1">Catalyzes the insertion of one atom of molecular oxygen into position 2 of the phenyl ring of 3-(3-hydroxyphenyl)propionate (3-HPP) and hydroxycinnamic acid (3HCI).</text>
</comment>
<comment type="catalytic activity">
    <reaction evidence="1">
        <text>3-(3-hydroxyphenyl)propanoate + NADH + O2 + H(+) = 3-(2,3-dihydroxyphenyl)propanoate + NAD(+) + H2O</text>
        <dbReference type="Rhea" id="RHEA:24785"/>
        <dbReference type="ChEBI" id="CHEBI:15377"/>
        <dbReference type="ChEBI" id="CHEBI:15378"/>
        <dbReference type="ChEBI" id="CHEBI:15379"/>
        <dbReference type="ChEBI" id="CHEBI:46951"/>
        <dbReference type="ChEBI" id="CHEBI:57277"/>
        <dbReference type="ChEBI" id="CHEBI:57540"/>
        <dbReference type="ChEBI" id="CHEBI:57945"/>
        <dbReference type="EC" id="1.14.13.127"/>
    </reaction>
</comment>
<comment type="catalytic activity">
    <reaction evidence="1">
        <text>(2E)-3-(3-hydroxyphenyl)prop-2-enoate + NADH + O2 + H(+) = (2E)-3-(2,3-dihydroxyphenyl)prop-2-enoate + NAD(+) + H2O</text>
        <dbReference type="Rhea" id="RHEA:27846"/>
        <dbReference type="ChEBI" id="CHEBI:15377"/>
        <dbReference type="ChEBI" id="CHEBI:15378"/>
        <dbReference type="ChEBI" id="CHEBI:15379"/>
        <dbReference type="ChEBI" id="CHEBI:47928"/>
        <dbReference type="ChEBI" id="CHEBI:57540"/>
        <dbReference type="ChEBI" id="CHEBI:57945"/>
        <dbReference type="ChEBI" id="CHEBI:58642"/>
        <dbReference type="EC" id="1.14.13.127"/>
    </reaction>
</comment>
<comment type="cofactor">
    <cofactor evidence="1">
        <name>FAD</name>
        <dbReference type="ChEBI" id="CHEBI:57692"/>
    </cofactor>
</comment>
<comment type="pathway">
    <text evidence="1">Aromatic compound metabolism; 3-phenylpropanoate degradation.</text>
</comment>
<comment type="similarity">
    <text evidence="1">Belongs to the PheA/TfdB FAD monooxygenase family.</text>
</comment>